<gene>
    <name evidence="1" type="primary">ppc</name>
    <name type="ordered locus">SPs1425</name>
</gene>
<keyword id="KW-0120">Carbon dioxide fixation</keyword>
<keyword id="KW-0456">Lyase</keyword>
<keyword id="KW-0460">Magnesium</keyword>
<sequence length="920" mass="104699">MPLKKLESSNNQTIIAEEVALLKEMLENITRRMIGDDAFTVIESIMVLSEKQDYIELEKVVANISNQEMEVISRYFSILPLLINISEDVDLAYEINHQNNTDTDYLGKLALTIKDLAGKDNGKDILEQVNVVPVLTAHPTQVQRKTILELTTHIHKLLRKYRDAKAGVINLEKWRQELYRYIEMIMQTDIIREKKLQVKNEIKNVMQYYDGSLIQAVTKLTTEYKNLAQKHGLELDNPKPITMGMWIGGDRDGNPFVTAETLCLSATVQSEVILNYYIDKLAALYRTFSLSSTLVQPNSEVERLASLSQDQSIYRGNEPYRRAFHYIQSRLKQTQIQLTNQPAARMSSSVGLNTSAWSSPASLENPILAYDSPVDFKADLKAIEQSLLDNGNSALIEGDLREVMQAVDIFGFFLASIDMRQDSSVQEACVAELLKGANIVDDYSSLSETEKCDVLLQQLMEEPRTLSSAAVAKSDLLEKELAIYTTARELKDKLGEEVIKQHIISHTESVSDMFELAIMLKEVGLVDQQRARVQIVPLFETIEDLDNARDIMAAYLSHDIVKSWIATNRNYQEIMLGYSDSNKDGGYLASGWTLYKAQNELTAIGEEHGVKITFFHGRGGTVGRGGGPSYDAITSQPFGSIKDRIRLTEQGEIIENKYGNKDVAYYHLEMLISASINRMVTQMITDPNEIDSFREIMDSIVADSNTIYRKLVFDNPHFYDYFFEASPIKEVSSLNIGSRPAARKTITEITGLRAIPWVFSWSQNRIMFPGWYGVGSAFKRYIDRAQGNLERLQHMYQTWPFFHSLLSNVDMVLSKSNMNIAFQYAQLAESQDVRDVFYEILDEWQLTKNVILAIQDHDDLLEDNPSLKHSLKSRLPYFNVLNYIQIELIKRWRNNQLDENDEKLIHTTINGIATGLRNSG</sequence>
<feature type="chain" id="PRO_0000411437" description="Phosphoenolpyruvate carboxylase">
    <location>
        <begin position="1"/>
        <end position="920"/>
    </location>
</feature>
<feature type="active site" evidence="1">
    <location>
        <position position="138"/>
    </location>
</feature>
<feature type="active site" evidence="1">
    <location>
        <position position="583"/>
    </location>
</feature>
<accession>P0DC99</accession>
<accession>Q8K873</accession>
<evidence type="ECO:0000255" key="1">
    <source>
        <dbReference type="HAMAP-Rule" id="MF_00595"/>
    </source>
</evidence>
<evidence type="ECO:0000305" key="2"/>
<reference key="1">
    <citation type="journal article" date="2003" name="Genome Res.">
        <title>Genome sequence of an M3 strain of Streptococcus pyogenes reveals a large-scale genomic rearrangement in invasive strains and new insights into phage evolution.</title>
        <authorList>
            <person name="Nakagawa I."/>
            <person name="Kurokawa K."/>
            <person name="Yamashita A."/>
            <person name="Nakata M."/>
            <person name="Tomiyasu Y."/>
            <person name="Okahashi N."/>
            <person name="Kawabata S."/>
            <person name="Yamazaki K."/>
            <person name="Shiba T."/>
            <person name="Yasunaga T."/>
            <person name="Hayashi H."/>
            <person name="Hattori M."/>
            <person name="Hamada S."/>
        </authorList>
    </citation>
    <scope>NUCLEOTIDE SEQUENCE [LARGE SCALE GENOMIC DNA]</scope>
    <source>
        <strain>SSI-1</strain>
    </source>
</reference>
<dbReference type="EC" id="4.1.1.31" evidence="1"/>
<dbReference type="EMBL" id="BA000034">
    <property type="protein sequence ID" value="BAC64520.1"/>
    <property type="status" value="ALT_INIT"/>
    <property type="molecule type" value="Genomic_DNA"/>
</dbReference>
<dbReference type="RefSeq" id="WP_032461387.1">
    <property type="nucleotide sequence ID" value="NC_004606.1"/>
</dbReference>
<dbReference type="SMR" id="P0DC99"/>
<dbReference type="KEGG" id="sps:SPs1425"/>
<dbReference type="HOGENOM" id="CLU_006557_2_0_9"/>
<dbReference type="GO" id="GO:0005829">
    <property type="term" value="C:cytosol"/>
    <property type="evidence" value="ECO:0007669"/>
    <property type="project" value="TreeGrafter"/>
</dbReference>
<dbReference type="GO" id="GO:0000287">
    <property type="term" value="F:magnesium ion binding"/>
    <property type="evidence" value="ECO:0007669"/>
    <property type="project" value="UniProtKB-UniRule"/>
</dbReference>
<dbReference type="GO" id="GO:0008964">
    <property type="term" value="F:phosphoenolpyruvate carboxylase activity"/>
    <property type="evidence" value="ECO:0007669"/>
    <property type="project" value="UniProtKB-UniRule"/>
</dbReference>
<dbReference type="GO" id="GO:0015977">
    <property type="term" value="P:carbon fixation"/>
    <property type="evidence" value="ECO:0007669"/>
    <property type="project" value="UniProtKB-UniRule"/>
</dbReference>
<dbReference type="GO" id="GO:0006107">
    <property type="term" value="P:oxaloacetate metabolic process"/>
    <property type="evidence" value="ECO:0007669"/>
    <property type="project" value="UniProtKB-UniRule"/>
</dbReference>
<dbReference type="GO" id="GO:0006099">
    <property type="term" value="P:tricarboxylic acid cycle"/>
    <property type="evidence" value="ECO:0007669"/>
    <property type="project" value="InterPro"/>
</dbReference>
<dbReference type="Gene3D" id="1.20.1440.90">
    <property type="entry name" value="Phosphoenolpyruvate/pyruvate domain"/>
    <property type="match status" value="1"/>
</dbReference>
<dbReference type="HAMAP" id="MF_00595">
    <property type="entry name" value="PEPcase_type1"/>
    <property type="match status" value="1"/>
</dbReference>
<dbReference type="InterPro" id="IPR021135">
    <property type="entry name" value="PEP_COase"/>
</dbReference>
<dbReference type="InterPro" id="IPR022805">
    <property type="entry name" value="PEP_COase_bac/pln-type"/>
</dbReference>
<dbReference type="InterPro" id="IPR018129">
    <property type="entry name" value="PEP_COase_Lys_AS"/>
</dbReference>
<dbReference type="InterPro" id="IPR033129">
    <property type="entry name" value="PEPCASE_His_AS"/>
</dbReference>
<dbReference type="InterPro" id="IPR015813">
    <property type="entry name" value="Pyrv/PenolPyrv_kinase-like_dom"/>
</dbReference>
<dbReference type="NCBIfam" id="NF000584">
    <property type="entry name" value="PRK00009.1"/>
    <property type="match status" value="1"/>
</dbReference>
<dbReference type="PANTHER" id="PTHR30523">
    <property type="entry name" value="PHOSPHOENOLPYRUVATE CARBOXYLASE"/>
    <property type="match status" value="1"/>
</dbReference>
<dbReference type="PANTHER" id="PTHR30523:SF6">
    <property type="entry name" value="PHOSPHOENOLPYRUVATE CARBOXYLASE"/>
    <property type="match status" value="1"/>
</dbReference>
<dbReference type="Pfam" id="PF00311">
    <property type="entry name" value="PEPcase"/>
    <property type="match status" value="1"/>
</dbReference>
<dbReference type="PRINTS" id="PR00150">
    <property type="entry name" value="PEPCARBXLASE"/>
</dbReference>
<dbReference type="SUPFAM" id="SSF51621">
    <property type="entry name" value="Phosphoenolpyruvate/pyruvate domain"/>
    <property type="match status" value="1"/>
</dbReference>
<dbReference type="PROSITE" id="PS00781">
    <property type="entry name" value="PEPCASE_1"/>
    <property type="match status" value="1"/>
</dbReference>
<dbReference type="PROSITE" id="PS00393">
    <property type="entry name" value="PEPCASE_2"/>
    <property type="match status" value="1"/>
</dbReference>
<proteinExistence type="inferred from homology"/>
<comment type="function">
    <text evidence="1">Forms oxaloacetate, a four-carbon dicarboxylic acid source for the tricarboxylic acid cycle.</text>
</comment>
<comment type="catalytic activity">
    <reaction evidence="1">
        <text>oxaloacetate + phosphate = phosphoenolpyruvate + hydrogencarbonate</text>
        <dbReference type="Rhea" id="RHEA:28370"/>
        <dbReference type="ChEBI" id="CHEBI:16452"/>
        <dbReference type="ChEBI" id="CHEBI:17544"/>
        <dbReference type="ChEBI" id="CHEBI:43474"/>
        <dbReference type="ChEBI" id="CHEBI:58702"/>
        <dbReference type="EC" id="4.1.1.31"/>
    </reaction>
</comment>
<comment type="cofactor">
    <cofactor evidence="1">
        <name>Mg(2+)</name>
        <dbReference type="ChEBI" id="CHEBI:18420"/>
    </cofactor>
</comment>
<comment type="similarity">
    <text evidence="1">Belongs to the PEPCase type 1 family.</text>
</comment>
<comment type="sequence caution" evidence="2">
    <conflict type="erroneous initiation">
        <sequence resource="EMBL-CDS" id="BAC64520"/>
    </conflict>
</comment>
<name>CAPP_STRPQ</name>
<organism>
    <name type="scientific">Streptococcus pyogenes serotype M3 (strain SSI-1)</name>
    <dbReference type="NCBI Taxonomy" id="193567"/>
    <lineage>
        <taxon>Bacteria</taxon>
        <taxon>Bacillati</taxon>
        <taxon>Bacillota</taxon>
        <taxon>Bacilli</taxon>
        <taxon>Lactobacillales</taxon>
        <taxon>Streptococcaceae</taxon>
        <taxon>Streptococcus</taxon>
    </lineage>
</organism>
<protein>
    <recommendedName>
        <fullName evidence="1">Phosphoenolpyruvate carboxylase</fullName>
        <shortName evidence="1">PEPC</shortName>
        <shortName evidence="1">PEPCase</shortName>
        <ecNumber evidence="1">4.1.1.31</ecNumber>
    </recommendedName>
</protein>